<comment type="function">
    <text>Binds, preferentially, to the Maundrell ARS consensus sequence within ARS3002.</text>
</comment>
<comment type="subunit">
    <text evidence="2">Interacts with mcm10.</text>
</comment>
<comment type="subcellular location">
    <subcellularLocation>
        <location>Nucleus</location>
    </subcellularLocation>
</comment>
<gene>
    <name type="primary">abp1</name>
    <name type="ORF">SPBC1105.04c</name>
</gene>
<dbReference type="EMBL" id="U39079">
    <property type="protein sequence ID" value="AAB01537.1"/>
    <property type="molecule type" value="Genomic_DNA"/>
</dbReference>
<dbReference type="EMBL" id="CU329671">
    <property type="protein sequence ID" value="CAB50967.1"/>
    <property type="molecule type" value="Genomic_DNA"/>
</dbReference>
<dbReference type="PIR" id="T39281">
    <property type="entry name" value="T39281"/>
</dbReference>
<dbReference type="RefSeq" id="NP_596460.1">
    <property type="nucleotide sequence ID" value="NM_001022379.2"/>
</dbReference>
<dbReference type="PDB" id="1IUF">
    <property type="method" value="NMR"/>
    <property type="chains" value="A=1-141"/>
</dbReference>
<dbReference type="PDBsum" id="1IUF"/>
<dbReference type="SMR" id="P49777"/>
<dbReference type="BioGRID" id="276515">
    <property type="interactions" value="132"/>
</dbReference>
<dbReference type="FunCoup" id="P49777">
    <property type="interactions" value="287"/>
</dbReference>
<dbReference type="IntAct" id="P49777">
    <property type="interactions" value="2"/>
</dbReference>
<dbReference type="STRING" id="284812.P49777"/>
<dbReference type="iPTMnet" id="P49777"/>
<dbReference type="PaxDb" id="4896-SPBC1105.04c.1"/>
<dbReference type="EnsemblFungi" id="SPBC1105.04c.1">
    <property type="protein sequence ID" value="SPBC1105.04c.1:pep"/>
    <property type="gene ID" value="SPBC1105.04c"/>
</dbReference>
<dbReference type="GeneID" id="2539971"/>
<dbReference type="KEGG" id="spo:2539971"/>
<dbReference type="PomBase" id="SPBC1105.04c"/>
<dbReference type="VEuPathDB" id="FungiDB:SPBC1105.04c"/>
<dbReference type="eggNOG" id="KOG3105">
    <property type="taxonomic scope" value="Eukaryota"/>
</dbReference>
<dbReference type="HOGENOM" id="CLU_018294_0_3_1"/>
<dbReference type="InParanoid" id="P49777"/>
<dbReference type="OMA" id="QWMQKLD"/>
<dbReference type="PhylomeDB" id="P49777"/>
<dbReference type="EvolutionaryTrace" id="P49777"/>
<dbReference type="PRO" id="PR:P49777"/>
<dbReference type="Proteomes" id="UP000002485">
    <property type="component" value="Chromosome II"/>
</dbReference>
<dbReference type="GO" id="GO:0000785">
    <property type="term" value="C:chromatin"/>
    <property type="evidence" value="ECO:0000314"/>
    <property type="project" value="PomBase"/>
</dbReference>
<dbReference type="GO" id="GO:0000779">
    <property type="term" value="C:condensed chromosome, centromeric region"/>
    <property type="evidence" value="ECO:0000305"/>
    <property type="project" value="PomBase"/>
</dbReference>
<dbReference type="GO" id="GO:0031934">
    <property type="term" value="C:mating-type region heterochromatin"/>
    <property type="evidence" value="ECO:0000314"/>
    <property type="project" value="PomBase"/>
</dbReference>
<dbReference type="GO" id="GO:0005634">
    <property type="term" value="C:nucleus"/>
    <property type="evidence" value="ECO:0007005"/>
    <property type="project" value="PomBase"/>
</dbReference>
<dbReference type="GO" id="GO:0019237">
    <property type="term" value="F:centromeric DNA binding"/>
    <property type="evidence" value="ECO:0000314"/>
    <property type="project" value="PomBase"/>
</dbReference>
<dbReference type="GO" id="GO:0140463">
    <property type="term" value="F:chromatin-protein adaptor activity"/>
    <property type="evidence" value="ECO:0000269"/>
    <property type="project" value="PomBase"/>
</dbReference>
<dbReference type="GO" id="GO:0003677">
    <property type="term" value="F:DNA binding"/>
    <property type="evidence" value="ECO:0000269"/>
    <property type="project" value="PomBase"/>
</dbReference>
<dbReference type="GO" id="GO:0043565">
    <property type="term" value="F:sequence-specific DNA binding"/>
    <property type="evidence" value="ECO:0000314"/>
    <property type="project" value="PomBase"/>
</dbReference>
<dbReference type="GO" id="GO:0007535">
    <property type="term" value="P:donor selection"/>
    <property type="evidence" value="ECO:0000314"/>
    <property type="project" value="PomBase"/>
</dbReference>
<dbReference type="FunFam" id="1.10.10.60:FF:000877">
    <property type="entry name" value="CENP-B homolog protein 1"/>
    <property type="match status" value="1"/>
</dbReference>
<dbReference type="Gene3D" id="1.10.10.60">
    <property type="entry name" value="Homeodomain-like"/>
    <property type="match status" value="2"/>
</dbReference>
<dbReference type="InterPro" id="IPR050863">
    <property type="entry name" value="CenT-Element_Derived"/>
</dbReference>
<dbReference type="InterPro" id="IPR004875">
    <property type="entry name" value="DDE_SF_endonuclease_dom"/>
</dbReference>
<dbReference type="InterPro" id="IPR009057">
    <property type="entry name" value="Homeodomain-like_sf"/>
</dbReference>
<dbReference type="InterPro" id="IPR041188">
    <property type="entry name" value="HTH_ABP1_N"/>
</dbReference>
<dbReference type="InterPro" id="IPR006600">
    <property type="entry name" value="HTH_CenpB_DNA-bd_dom"/>
</dbReference>
<dbReference type="PANTHER" id="PTHR19303:SF73">
    <property type="entry name" value="PROTEIN PDC2"/>
    <property type="match status" value="1"/>
</dbReference>
<dbReference type="PANTHER" id="PTHR19303">
    <property type="entry name" value="TRANSPOSON"/>
    <property type="match status" value="1"/>
</dbReference>
<dbReference type="Pfam" id="PF03184">
    <property type="entry name" value="DDE_1"/>
    <property type="match status" value="1"/>
</dbReference>
<dbReference type="Pfam" id="PF18107">
    <property type="entry name" value="HTH_ABP1_N"/>
    <property type="match status" value="1"/>
</dbReference>
<dbReference type="Pfam" id="PF03221">
    <property type="entry name" value="HTH_Tnp_Tc5"/>
    <property type="match status" value="1"/>
</dbReference>
<dbReference type="SMART" id="SM00674">
    <property type="entry name" value="CENPB"/>
    <property type="match status" value="1"/>
</dbReference>
<dbReference type="SUPFAM" id="SSF46689">
    <property type="entry name" value="Homeodomain-like"/>
    <property type="match status" value="2"/>
</dbReference>
<dbReference type="PROSITE" id="PS51253">
    <property type="entry name" value="HTH_CENPB"/>
    <property type="match status" value="1"/>
</dbReference>
<feature type="chain" id="PRO_0000126133" description="ARS-binding protein 1">
    <location>
        <begin position="1"/>
        <end position="522"/>
    </location>
</feature>
<feature type="domain" description="HTH CENPB-type" evidence="1">
    <location>
        <begin position="70"/>
        <end position="144"/>
    </location>
</feature>
<feature type="modified residue" description="Phosphothreonine" evidence="3">
    <location>
        <position position="460"/>
    </location>
</feature>
<feature type="sequence conflict" description="In Ref. 1; AAB01537." evidence="4" ref="1">
    <original>C</original>
    <variation>S</variation>
    <location>
        <position position="336"/>
    </location>
</feature>
<feature type="strand" evidence="5">
    <location>
        <begin position="5"/>
        <end position="7"/>
    </location>
</feature>
<feature type="helix" evidence="5">
    <location>
        <begin position="12"/>
        <end position="22"/>
    </location>
</feature>
<feature type="strand" evidence="5">
    <location>
        <begin position="23"/>
        <end position="26"/>
    </location>
</feature>
<feature type="helix" evidence="5">
    <location>
        <begin position="30"/>
        <end position="41"/>
    </location>
</feature>
<feature type="strand" evidence="5">
    <location>
        <begin position="46"/>
        <end position="49"/>
    </location>
</feature>
<feature type="helix" evidence="5">
    <location>
        <begin position="52"/>
        <end position="60"/>
    </location>
</feature>
<feature type="turn" evidence="5">
    <location>
        <begin position="61"/>
        <end position="63"/>
    </location>
</feature>
<feature type="strand" evidence="5">
    <location>
        <begin position="66"/>
        <end position="72"/>
    </location>
</feature>
<feature type="helix" evidence="5">
    <location>
        <begin position="80"/>
        <end position="92"/>
    </location>
</feature>
<feature type="helix" evidence="5">
    <location>
        <begin position="102"/>
        <end position="114"/>
    </location>
</feature>
<feature type="strand" evidence="5">
    <location>
        <begin position="116"/>
        <end position="119"/>
    </location>
</feature>
<feature type="helix" evidence="5">
    <location>
        <begin position="129"/>
        <end position="137"/>
    </location>
</feature>
<sequence>MGKIKRRAITEHEKRALRHYFFQLQNRSGQQDLIEWFREKFGKDISQPSVSQILSSKYSYLDNTVEKPWDVKRNRPPKYPLLEAALFEWQVQQGDDATLSGETIKRAAAILWHKIPEYQDQPVPNFSNGWLEGFRKRHILHAINEQPTESVVLNNTEPPNDPLSRVYDVTRLTNINDIFTMQETGLFWKLVPNGTPEVEDIKGITRFKARITLTVCCNASGTERLPLWVIGYSQSPRVFRAANVKPEVMNFKWRSNGKASMTTAIMEEWLRWFDACMEGRKVILLIDSYTPHLRAVENIRNSGNDLRNTTVITLPSTSASISQPCSEGVIYALKACYRKHWVQYILEQNELGRNPYNTTNVLRAILWLVKAWTTDISPEIIENAFNLSGVLGLFNESAVTSRALDEMIHPLRELVSEFSVQAAMRIEDFISPSEENIVDSSEDIINQIASQYMDDRAFETDEEESTEFQITTKDAMKAIELLLNYEAQQPDGNPAITISLLNYQKLLEARGGNVNLSRLRST</sequence>
<keyword id="KW-0002">3D-structure</keyword>
<keyword id="KW-0238">DNA-binding</keyword>
<keyword id="KW-0539">Nucleus</keyword>
<keyword id="KW-0597">Phosphoprotein</keyword>
<keyword id="KW-1185">Reference proteome</keyword>
<proteinExistence type="evidence at protein level"/>
<accession>P49777</accession>
<accession>Q9URU7</accession>
<reference key="1">
    <citation type="journal article" date="1996" name="Proc. Natl. Acad. Sci. U.S.A.">
        <title>Identification, purification, and molecular cloning of autonomously replicating sequence-binding protein 1 from fission yeast Schizosaccharomyces pombe.</title>
        <authorList>
            <person name="Murakami Y."/>
            <person name="Huberman J.A."/>
            <person name="Hurwitz J."/>
        </authorList>
    </citation>
    <scope>NUCLEOTIDE SEQUENCE [GENOMIC DNA]</scope>
    <source>
        <strain>972 / ATCC 24843</strain>
    </source>
</reference>
<reference key="2">
    <citation type="journal article" date="2002" name="Nature">
        <title>The genome sequence of Schizosaccharomyces pombe.</title>
        <authorList>
            <person name="Wood V."/>
            <person name="Gwilliam R."/>
            <person name="Rajandream M.A."/>
            <person name="Lyne M.H."/>
            <person name="Lyne R."/>
            <person name="Stewart A."/>
            <person name="Sgouros J.G."/>
            <person name="Peat N."/>
            <person name="Hayles J."/>
            <person name="Baker S.G."/>
            <person name="Basham D."/>
            <person name="Bowman S."/>
            <person name="Brooks K."/>
            <person name="Brown D."/>
            <person name="Brown S."/>
            <person name="Chillingworth T."/>
            <person name="Churcher C.M."/>
            <person name="Collins M."/>
            <person name="Connor R."/>
            <person name="Cronin A."/>
            <person name="Davis P."/>
            <person name="Feltwell T."/>
            <person name="Fraser A."/>
            <person name="Gentles S."/>
            <person name="Goble A."/>
            <person name="Hamlin N."/>
            <person name="Harris D.E."/>
            <person name="Hidalgo J."/>
            <person name="Hodgson G."/>
            <person name="Holroyd S."/>
            <person name="Hornsby T."/>
            <person name="Howarth S."/>
            <person name="Huckle E.J."/>
            <person name="Hunt S."/>
            <person name="Jagels K."/>
            <person name="James K.D."/>
            <person name="Jones L."/>
            <person name="Jones M."/>
            <person name="Leather S."/>
            <person name="McDonald S."/>
            <person name="McLean J."/>
            <person name="Mooney P."/>
            <person name="Moule S."/>
            <person name="Mungall K.L."/>
            <person name="Murphy L.D."/>
            <person name="Niblett D."/>
            <person name="Odell C."/>
            <person name="Oliver K."/>
            <person name="O'Neil S."/>
            <person name="Pearson D."/>
            <person name="Quail M.A."/>
            <person name="Rabbinowitsch E."/>
            <person name="Rutherford K.M."/>
            <person name="Rutter S."/>
            <person name="Saunders D."/>
            <person name="Seeger K."/>
            <person name="Sharp S."/>
            <person name="Skelton J."/>
            <person name="Simmonds M.N."/>
            <person name="Squares R."/>
            <person name="Squares S."/>
            <person name="Stevens K."/>
            <person name="Taylor K."/>
            <person name="Taylor R.G."/>
            <person name="Tivey A."/>
            <person name="Walsh S.V."/>
            <person name="Warren T."/>
            <person name="Whitehead S."/>
            <person name="Woodward J.R."/>
            <person name="Volckaert G."/>
            <person name="Aert R."/>
            <person name="Robben J."/>
            <person name="Grymonprez B."/>
            <person name="Weltjens I."/>
            <person name="Vanstreels E."/>
            <person name="Rieger M."/>
            <person name="Schaefer M."/>
            <person name="Mueller-Auer S."/>
            <person name="Gabel C."/>
            <person name="Fuchs M."/>
            <person name="Duesterhoeft A."/>
            <person name="Fritzc C."/>
            <person name="Holzer E."/>
            <person name="Moestl D."/>
            <person name="Hilbert H."/>
            <person name="Borzym K."/>
            <person name="Langer I."/>
            <person name="Beck A."/>
            <person name="Lehrach H."/>
            <person name="Reinhardt R."/>
            <person name="Pohl T.M."/>
            <person name="Eger P."/>
            <person name="Zimmermann W."/>
            <person name="Wedler H."/>
            <person name="Wambutt R."/>
            <person name="Purnelle B."/>
            <person name="Goffeau A."/>
            <person name="Cadieu E."/>
            <person name="Dreano S."/>
            <person name="Gloux S."/>
            <person name="Lelaure V."/>
            <person name="Mottier S."/>
            <person name="Galibert F."/>
            <person name="Aves S.J."/>
            <person name="Xiang Z."/>
            <person name="Hunt C."/>
            <person name="Moore K."/>
            <person name="Hurst S.M."/>
            <person name="Lucas M."/>
            <person name="Rochet M."/>
            <person name="Gaillardin C."/>
            <person name="Tallada V.A."/>
            <person name="Garzon A."/>
            <person name="Thode G."/>
            <person name="Daga R.R."/>
            <person name="Cruzado L."/>
            <person name="Jimenez J."/>
            <person name="Sanchez M."/>
            <person name="del Rey F."/>
            <person name="Benito J."/>
            <person name="Dominguez A."/>
            <person name="Revuelta J.L."/>
            <person name="Moreno S."/>
            <person name="Armstrong J."/>
            <person name="Forsburg S.L."/>
            <person name="Cerutti L."/>
            <person name="Lowe T."/>
            <person name="McCombie W.R."/>
            <person name="Paulsen I."/>
            <person name="Potashkin J."/>
            <person name="Shpakovski G.V."/>
            <person name="Ussery D."/>
            <person name="Barrell B.G."/>
            <person name="Nurse P."/>
        </authorList>
    </citation>
    <scope>NUCLEOTIDE SEQUENCE [LARGE SCALE GENOMIC DNA]</scope>
    <source>
        <strain>972 / ATCC 24843</strain>
    </source>
</reference>
<reference key="3">
    <citation type="journal article" date="2006" name="Cell Div.">
        <title>The CENP-B homolog, Abp1, interacts with the initiation protein Cdc23 (MCM10) and is required for efficient DNA replication in fission yeast.</title>
        <authorList>
            <person name="Locovei A.M."/>
            <person name="Spiga M.-G."/>
            <person name="Tanaka K."/>
            <person name="Murakami Y."/>
            <person name="D'Urso G."/>
        </authorList>
    </citation>
    <scope>INTERACTION WITH ABP1</scope>
</reference>
<reference key="4">
    <citation type="journal article" date="2008" name="J. Proteome Res.">
        <title>Phosphoproteome analysis of fission yeast.</title>
        <authorList>
            <person name="Wilson-Grady J.T."/>
            <person name="Villen J."/>
            <person name="Gygi S.P."/>
        </authorList>
    </citation>
    <scope>PHOSPHORYLATION [LARGE SCALE ANALYSIS] AT THR-460</scope>
    <scope>IDENTIFICATION BY MASS SPECTROMETRY</scope>
</reference>
<name>ABP1_SCHPO</name>
<organism>
    <name type="scientific">Schizosaccharomyces pombe (strain 972 / ATCC 24843)</name>
    <name type="common">Fission yeast</name>
    <dbReference type="NCBI Taxonomy" id="284812"/>
    <lineage>
        <taxon>Eukaryota</taxon>
        <taxon>Fungi</taxon>
        <taxon>Dikarya</taxon>
        <taxon>Ascomycota</taxon>
        <taxon>Taphrinomycotina</taxon>
        <taxon>Schizosaccharomycetes</taxon>
        <taxon>Schizosaccharomycetales</taxon>
        <taxon>Schizosaccharomycetaceae</taxon>
        <taxon>Schizosaccharomyces</taxon>
    </lineage>
</organism>
<evidence type="ECO:0000255" key="1">
    <source>
        <dbReference type="PROSITE-ProRule" id="PRU00583"/>
    </source>
</evidence>
<evidence type="ECO:0000269" key="2">
    <source>
    </source>
</evidence>
<evidence type="ECO:0000269" key="3">
    <source>
    </source>
</evidence>
<evidence type="ECO:0000305" key="4"/>
<evidence type="ECO:0007829" key="5">
    <source>
        <dbReference type="PDB" id="1IUF"/>
    </source>
</evidence>
<protein>
    <recommendedName>
        <fullName>ARS-binding protein 1</fullName>
    </recommendedName>
</protein>